<keyword id="KW-0007">Acetylation</keyword>
<keyword id="KW-0167">Capsid protein</keyword>
<keyword id="KW-1139">Helical capsid protein</keyword>
<keyword id="KW-0946">Virion</keyword>
<protein>
    <recommendedName>
        <fullName>Capsid protein</fullName>
    </recommendedName>
    <alternativeName>
        <fullName>Coat protein</fullName>
    </alternativeName>
</protein>
<comment type="function">
    <text>Capsid protein self-assembles to form rod-shaped virions about 18 nm in diameter with a central canal enclosing the viral genomic RNA.</text>
</comment>
<comment type="subcellular location">
    <subcellularLocation>
        <location evidence="2">Virion</location>
    </subcellularLocation>
</comment>
<comment type="similarity">
    <text evidence="2">Belongs to the virgaviridae capsid protein family.</text>
</comment>
<name>CAPSD_TOMKO</name>
<sequence>MSYTVSSANQLVYLGSVWADPLELQNLCTSALGNQFQTQQARTTVQQQFSDVWKTIPTATVRFPATGFKVFRYNAVLDSLVSALLGAFDTRNRIIEVENPQNPTTAETLDATRRVDDATVAIRASISNLMNELVRGTGMYNQALFESASGLTWATTP</sequence>
<accession>Q83482</accession>
<organism>
    <name type="scientific">Tomato mosaic virus (strain Korean)</name>
    <name type="common">ToMV</name>
    <dbReference type="NCBI Taxonomy" id="138313"/>
    <lineage>
        <taxon>Viruses</taxon>
        <taxon>Riboviria</taxon>
        <taxon>Orthornavirae</taxon>
        <taxon>Kitrinoviricota</taxon>
        <taxon>Alsuviricetes</taxon>
        <taxon>Martellivirales</taxon>
        <taxon>Virgaviridae</taxon>
        <taxon>Tobamovirus</taxon>
        <taxon>Tomato mosaic virus</taxon>
    </lineage>
</organism>
<evidence type="ECO:0000250" key="1"/>
<evidence type="ECO:0000305" key="2"/>
<reference key="1">
    <citation type="submission" date="1994-08" db="EMBL/GenBank/DDBJ databases">
        <title>Characterization of coat protein from TMV Korean tomato strain.</title>
        <authorList>
            <person name="Park E.K."/>
            <person name="Lee C.H."/>
            <person name="Lee Y.G."/>
            <person name="Lee Y.H."/>
        </authorList>
    </citation>
    <scope>NUCLEOTIDE SEQUENCE [GENOMIC RNA]</scope>
</reference>
<feature type="initiator methionine" description="Removed; by host" evidence="1">
    <location>
        <position position="1"/>
    </location>
</feature>
<feature type="chain" id="PRO_0000144949" description="Capsid protein">
    <location>
        <begin position="2"/>
        <end position="157"/>
    </location>
</feature>
<feature type="modified residue" description="N-acetylserine; by host" evidence="1">
    <location>
        <position position="2"/>
    </location>
</feature>
<organismHost>
    <name type="scientific">Antirrhinum majus</name>
    <name type="common">Garden snapdragon</name>
    <dbReference type="NCBI Taxonomy" id="4151"/>
</organismHost>
<organismHost>
    <name type="scientific">Capsicum</name>
    <name type="common">peppers</name>
    <dbReference type="NCBI Taxonomy" id="4071"/>
</organismHost>
<organismHost>
    <name type="scientific">Delphinium</name>
    <dbReference type="NCBI Taxonomy" id="46246"/>
</organismHost>
<organismHost>
    <name type="scientific">Petunia</name>
    <dbReference type="NCBI Taxonomy" id="4101"/>
</organismHost>
<organismHost>
    <name type="scientific">Solanum lycopersicum</name>
    <name type="common">Tomato</name>
    <name type="synonym">Lycopersicon esculentum</name>
    <dbReference type="NCBI Taxonomy" id="4081"/>
</organismHost>
<organismHost>
    <name type="scientific">Tagetes</name>
    <name type="common">marigolds</name>
    <dbReference type="NCBI Taxonomy" id="13707"/>
</organismHost>
<dbReference type="EMBL" id="L35074">
    <property type="protein sequence ID" value="AAA46589.1"/>
    <property type="molecule type" value="Genomic_RNA"/>
</dbReference>
<dbReference type="SMR" id="Q83482"/>
<dbReference type="GO" id="GO:0019029">
    <property type="term" value="C:helical viral capsid"/>
    <property type="evidence" value="ECO:0007669"/>
    <property type="project" value="UniProtKB-KW"/>
</dbReference>
<dbReference type="GO" id="GO:0005198">
    <property type="term" value="F:structural molecule activity"/>
    <property type="evidence" value="ECO:0007669"/>
    <property type="project" value="InterPro"/>
</dbReference>
<dbReference type="Gene3D" id="1.20.120.70">
    <property type="entry name" value="Tobacco mosaic virus-like, coat protein"/>
    <property type="match status" value="1"/>
</dbReference>
<dbReference type="InterPro" id="IPR001337">
    <property type="entry name" value="TMV-like_coat"/>
</dbReference>
<dbReference type="InterPro" id="IPR036417">
    <property type="entry name" value="TMV-like_coat_sf"/>
</dbReference>
<dbReference type="Pfam" id="PF00721">
    <property type="entry name" value="TMV_coat"/>
    <property type="match status" value="1"/>
</dbReference>
<dbReference type="SUPFAM" id="SSF47195">
    <property type="entry name" value="TMV-like viral coat proteins"/>
    <property type="match status" value="1"/>
</dbReference>
<gene>
    <name type="primary">CP</name>
</gene>
<proteinExistence type="inferred from homology"/>